<protein>
    <recommendedName>
        <fullName>GPI mannosyltransferase 2</fullName>
        <ecNumber>2.4.1.-</ecNumber>
    </recommendedName>
    <alternativeName>
        <fullName>GPI mannosyltransferase II</fullName>
        <shortName>GPI-MT-II</shortName>
    </alternativeName>
    <alternativeName>
        <fullName>Glycosylphosphatidylinositol-anchor biosynthesis protein 18</fullName>
    </alternativeName>
</protein>
<gene>
    <name type="primary">GPI18</name>
    <name type="ordered locus">YALI0F11649g</name>
</gene>
<name>GPI18_YARLI</name>
<proteinExistence type="inferred from homology"/>
<reference key="1">
    <citation type="journal article" date="2004" name="Nature">
        <title>Genome evolution in yeasts.</title>
        <authorList>
            <person name="Dujon B."/>
            <person name="Sherman D."/>
            <person name="Fischer G."/>
            <person name="Durrens P."/>
            <person name="Casaregola S."/>
            <person name="Lafontaine I."/>
            <person name="de Montigny J."/>
            <person name="Marck C."/>
            <person name="Neuveglise C."/>
            <person name="Talla E."/>
            <person name="Goffard N."/>
            <person name="Frangeul L."/>
            <person name="Aigle M."/>
            <person name="Anthouard V."/>
            <person name="Babour A."/>
            <person name="Barbe V."/>
            <person name="Barnay S."/>
            <person name="Blanchin S."/>
            <person name="Beckerich J.-M."/>
            <person name="Beyne E."/>
            <person name="Bleykasten C."/>
            <person name="Boisrame A."/>
            <person name="Boyer J."/>
            <person name="Cattolico L."/>
            <person name="Confanioleri F."/>
            <person name="de Daruvar A."/>
            <person name="Despons L."/>
            <person name="Fabre E."/>
            <person name="Fairhead C."/>
            <person name="Ferry-Dumazet H."/>
            <person name="Groppi A."/>
            <person name="Hantraye F."/>
            <person name="Hennequin C."/>
            <person name="Jauniaux N."/>
            <person name="Joyet P."/>
            <person name="Kachouri R."/>
            <person name="Kerrest A."/>
            <person name="Koszul R."/>
            <person name="Lemaire M."/>
            <person name="Lesur I."/>
            <person name="Ma L."/>
            <person name="Muller H."/>
            <person name="Nicaud J.-M."/>
            <person name="Nikolski M."/>
            <person name="Oztas S."/>
            <person name="Ozier-Kalogeropoulos O."/>
            <person name="Pellenz S."/>
            <person name="Potier S."/>
            <person name="Richard G.-F."/>
            <person name="Straub M.-L."/>
            <person name="Suleau A."/>
            <person name="Swennen D."/>
            <person name="Tekaia F."/>
            <person name="Wesolowski-Louvel M."/>
            <person name="Westhof E."/>
            <person name="Wirth B."/>
            <person name="Zeniou-Meyer M."/>
            <person name="Zivanovic Y."/>
            <person name="Bolotin-Fukuhara M."/>
            <person name="Thierry A."/>
            <person name="Bouchier C."/>
            <person name="Caudron B."/>
            <person name="Scarpelli C."/>
            <person name="Gaillardin C."/>
            <person name="Weissenbach J."/>
            <person name="Wincker P."/>
            <person name="Souciet J.-L."/>
        </authorList>
    </citation>
    <scope>NUCLEOTIDE SEQUENCE [LARGE SCALE GENOMIC DNA]</scope>
    <source>
        <strain>CLIB 122 / E 150</strain>
    </source>
</reference>
<comment type="function">
    <text evidence="1">Mannosyltransferase involved in glycosylphosphatidylinositol-anchor biosynthesis. Transfers the second mannose to the glycosylphosphatidylinositol during GPI precursor assembly (By similarity).</text>
</comment>
<comment type="pathway">
    <text>Glycolipid biosynthesis; glycosylphosphatidylinositol-anchor biosynthesis.</text>
</comment>
<comment type="subcellular location">
    <subcellularLocation>
        <location evidence="1">Endoplasmic reticulum membrane</location>
        <topology evidence="1">Multi-pass membrane protein</topology>
    </subcellularLocation>
</comment>
<comment type="similarity">
    <text evidence="3">Belongs to the PIGV family.</text>
</comment>
<feature type="chain" id="PRO_0000246249" description="GPI mannosyltransferase 2">
    <location>
        <begin position="1"/>
        <end position="357"/>
    </location>
</feature>
<feature type="transmembrane region" description="Helical" evidence="2">
    <location>
        <begin position="6"/>
        <end position="26"/>
    </location>
</feature>
<feature type="transmembrane region" description="Helical" evidence="2">
    <location>
        <begin position="86"/>
        <end position="106"/>
    </location>
</feature>
<feature type="transmembrane region" description="Helical" evidence="2">
    <location>
        <begin position="128"/>
        <end position="148"/>
    </location>
</feature>
<feature type="transmembrane region" description="Helical" evidence="2">
    <location>
        <begin position="167"/>
        <end position="187"/>
    </location>
</feature>
<feature type="transmembrane region" description="Helical" evidence="2">
    <location>
        <begin position="201"/>
        <end position="221"/>
    </location>
</feature>
<feature type="transmembrane region" description="Helical" evidence="2">
    <location>
        <begin position="257"/>
        <end position="277"/>
    </location>
</feature>
<feature type="transmembrane region" description="Helical" evidence="2">
    <location>
        <begin position="286"/>
        <end position="306"/>
    </location>
</feature>
<feature type="transmembrane region" description="Helical" evidence="2">
    <location>
        <begin position="334"/>
        <end position="354"/>
    </location>
</feature>
<accession>Q6C216</accession>
<dbReference type="EC" id="2.4.1.-"/>
<dbReference type="EMBL" id="CR382132">
    <property type="protein sequence ID" value="CAG78103.1"/>
    <property type="molecule type" value="Genomic_DNA"/>
</dbReference>
<dbReference type="RefSeq" id="XP_505296.1">
    <property type="nucleotide sequence ID" value="XM_505296.1"/>
</dbReference>
<dbReference type="FunCoup" id="Q6C216">
    <property type="interactions" value="289"/>
</dbReference>
<dbReference type="STRING" id="284591.Q6C216"/>
<dbReference type="CAZy" id="GT76">
    <property type="family name" value="Glycosyltransferase Family 76"/>
</dbReference>
<dbReference type="EnsemblFungi" id="CAG78103">
    <property type="protein sequence ID" value="CAG78103"/>
    <property type="gene ID" value="YALI0_F11649g"/>
</dbReference>
<dbReference type="KEGG" id="yli:2908624"/>
<dbReference type="VEuPathDB" id="FungiDB:YALI0_F11649g"/>
<dbReference type="HOGENOM" id="CLU_029048_0_0_1"/>
<dbReference type="InParanoid" id="Q6C216"/>
<dbReference type="OMA" id="CEWTLPS"/>
<dbReference type="OrthoDB" id="38563at4891"/>
<dbReference type="UniPathway" id="UPA00196"/>
<dbReference type="Proteomes" id="UP000001300">
    <property type="component" value="Chromosome F"/>
</dbReference>
<dbReference type="GO" id="GO:0005789">
    <property type="term" value="C:endoplasmic reticulum membrane"/>
    <property type="evidence" value="ECO:0000318"/>
    <property type="project" value="GO_Central"/>
</dbReference>
<dbReference type="GO" id="GO:0031501">
    <property type="term" value="C:mannosyltransferase complex"/>
    <property type="evidence" value="ECO:0000318"/>
    <property type="project" value="GO_Central"/>
</dbReference>
<dbReference type="GO" id="GO:0000009">
    <property type="term" value="F:alpha-1,6-mannosyltransferase activity"/>
    <property type="evidence" value="ECO:0007669"/>
    <property type="project" value="InterPro"/>
</dbReference>
<dbReference type="GO" id="GO:0004376">
    <property type="term" value="F:glycolipid mannosyltransferase activity"/>
    <property type="evidence" value="ECO:0007669"/>
    <property type="project" value="InterPro"/>
</dbReference>
<dbReference type="GO" id="GO:0000030">
    <property type="term" value="F:mannosyltransferase activity"/>
    <property type="evidence" value="ECO:0000318"/>
    <property type="project" value="GO_Central"/>
</dbReference>
<dbReference type="GO" id="GO:0006506">
    <property type="term" value="P:GPI anchor biosynthetic process"/>
    <property type="evidence" value="ECO:0000318"/>
    <property type="project" value="GO_Central"/>
</dbReference>
<dbReference type="InterPro" id="IPR007315">
    <property type="entry name" value="PIG-V/Gpi18"/>
</dbReference>
<dbReference type="PANTHER" id="PTHR12468">
    <property type="entry name" value="GPI MANNOSYLTRANSFERASE 2"/>
    <property type="match status" value="1"/>
</dbReference>
<dbReference type="PANTHER" id="PTHR12468:SF2">
    <property type="entry name" value="GPI MANNOSYLTRANSFERASE 2"/>
    <property type="match status" value="1"/>
</dbReference>
<dbReference type="Pfam" id="PF04188">
    <property type="entry name" value="Mannosyl_trans2"/>
    <property type="match status" value="2"/>
</dbReference>
<sequence length="357" mass="40723">MKHFTTLIVVFVAIKAYLVALALVVPRQYDTSSTLLFPNNRFLSRLVIWDSVFFVSSAERSHLYEHEWAFSWMWSRALGLAGSRDAIAYTAIAVSSLSHLLAALMLRKLTESVFHNKRFAETTALMYILSPAGIFLVAGYTESLFALLSFTGLYLRQRGQYPLAGAVLGASCLLRGNGLLWGIPFLFDLASAIKHNQFNRGVSVVIGGSLVGAVFLYTQYLPWSIFCPERDEWCNYYIPSIYGYVQQRYWNVGFLRYWTANNIPNFLFAAPVLYLMYQSMSTNPSLVPFYTVHAIMGLACVFMWHVQIITRISTCLPTLYWYMAKLAQGYNGHYVVRYIFVWITFQVVMWGAYLPPA</sequence>
<keyword id="KW-0256">Endoplasmic reticulum</keyword>
<keyword id="KW-0328">Glycosyltransferase</keyword>
<keyword id="KW-0337">GPI-anchor biosynthesis</keyword>
<keyword id="KW-0472">Membrane</keyword>
<keyword id="KW-1185">Reference proteome</keyword>
<keyword id="KW-0808">Transferase</keyword>
<keyword id="KW-0812">Transmembrane</keyword>
<keyword id="KW-1133">Transmembrane helix</keyword>
<evidence type="ECO:0000250" key="1"/>
<evidence type="ECO:0000255" key="2"/>
<evidence type="ECO:0000305" key="3"/>
<organism>
    <name type="scientific">Yarrowia lipolytica (strain CLIB 122 / E 150)</name>
    <name type="common">Yeast</name>
    <name type="synonym">Candida lipolytica</name>
    <dbReference type="NCBI Taxonomy" id="284591"/>
    <lineage>
        <taxon>Eukaryota</taxon>
        <taxon>Fungi</taxon>
        <taxon>Dikarya</taxon>
        <taxon>Ascomycota</taxon>
        <taxon>Saccharomycotina</taxon>
        <taxon>Dipodascomycetes</taxon>
        <taxon>Dipodascales</taxon>
        <taxon>Dipodascales incertae sedis</taxon>
        <taxon>Yarrowia</taxon>
    </lineage>
</organism>